<sequence length="483" mass="53837">MDYLVTIGLEIHAQILTRSKMFCGCSADYAHAPPNTHVCPVCMGLPGALPVPNRRAIELAALTGLALNCRISNENVISRKNYFYADLPSGYQRSQYDDPLCVDGWVEIEGDHGPKRIGLTRVHIEEDTGKLVHTNDGGSLVDFNRAGVPLMEIVSKPDLSSPEEARRYFQKLRQILVWIGVNSGDMESGALRCDANVSVRPVGQQEYGAKVEIKNINSFRFVERALAYEIERQIRALKAGEPIVQSTRGWDETSGTTVAQRTKEFAEDYRYFPEPDIPPLHLTDVWIAERRAELPELPDARRRRFIEEYELTAYDAGVLTDERAVSDFYEQAVAAARIRGVTPKDVANWMTGEFFRLLKETGETLEIAAQRLRPDYIGEVQELLNQGVITRTSAKEAFEASFREGRSPATIVAERGLAVIGAGDALTDLVRQAITGNPKVVEEYRRGKATAIKFLIGQVMKASRGQANPQAVQQALEQELARE</sequence>
<organism>
    <name type="scientific">Roseiflexus castenholzii (strain DSM 13941 / HLO8)</name>
    <dbReference type="NCBI Taxonomy" id="383372"/>
    <lineage>
        <taxon>Bacteria</taxon>
        <taxon>Bacillati</taxon>
        <taxon>Chloroflexota</taxon>
        <taxon>Chloroflexia</taxon>
        <taxon>Chloroflexales</taxon>
        <taxon>Roseiflexineae</taxon>
        <taxon>Roseiflexaceae</taxon>
        <taxon>Roseiflexus</taxon>
    </lineage>
</organism>
<protein>
    <recommendedName>
        <fullName evidence="1">Aspartyl/glutamyl-tRNA(Asn/Gln) amidotransferase subunit B</fullName>
        <shortName evidence="1">Asp/Glu-ADT subunit B</shortName>
        <ecNumber evidence="1">6.3.5.-</ecNumber>
    </recommendedName>
</protein>
<accession>A7NQY6</accession>
<reference key="1">
    <citation type="submission" date="2007-08" db="EMBL/GenBank/DDBJ databases">
        <title>Complete sequence of Roseiflexus castenholzii DSM 13941.</title>
        <authorList>
            <consortium name="US DOE Joint Genome Institute"/>
            <person name="Copeland A."/>
            <person name="Lucas S."/>
            <person name="Lapidus A."/>
            <person name="Barry K."/>
            <person name="Glavina del Rio T."/>
            <person name="Dalin E."/>
            <person name="Tice H."/>
            <person name="Pitluck S."/>
            <person name="Thompson L.S."/>
            <person name="Brettin T."/>
            <person name="Bruce D."/>
            <person name="Detter J.C."/>
            <person name="Han C."/>
            <person name="Tapia R."/>
            <person name="Schmutz J."/>
            <person name="Larimer F."/>
            <person name="Land M."/>
            <person name="Hauser L."/>
            <person name="Kyrpides N."/>
            <person name="Mikhailova N."/>
            <person name="Bryant D.A."/>
            <person name="Hanada S."/>
            <person name="Tsukatani Y."/>
            <person name="Richardson P."/>
        </authorList>
    </citation>
    <scope>NUCLEOTIDE SEQUENCE [LARGE SCALE GENOMIC DNA]</scope>
    <source>
        <strain>DSM 13941 / HLO8</strain>
    </source>
</reference>
<dbReference type="EC" id="6.3.5.-" evidence="1"/>
<dbReference type="EMBL" id="CP000804">
    <property type="protein sequence ID" value="ABU59982.1"/>
    <property type="molecule type" value="Genomic_DNA"/>
</dbReference>
<dbReference type="RefSeq" id="WP_012122405.1">
    <property type="nucleotide sequence ID" value="NC_009767.1"/>
</dbReference>
<dbReference type="SMR" id="A7NQY6"/>
<dbReference type="STRING" id="383372.Rcas_3949"/>
<dbReference type="KEGG" id="rca:Rcas_3949"/>
<dbReference type="eggNOG" id="COG0064">
    <property type="taxonomic scope" value="Bacteria"/>
</dbReference>
<dbReference type="HOGENOM" id="CLU_019240_0_0_0"/>
<dbReference type="OrthoDB" id="9804078at2"/>
<dbReference type="Proteomes" id="UP000000263">
    <property type="component" value="Chromosome"/>
</dbReference>
<dbReference type="GO" id="GO:0050566">
    <property type="term" value="F:asparaginyl-tRNA synthase (glutamine-hydrolyzing) activity"/>
    <property type="evidence" value="ECO:0007669"/>
    <property type="project" value="RHEA"/>
</dbReference>
<dbReference type="GO" id="GO:0005524">
    <property type="term" value="F:ATP binding"/>
    <property type="evidence" value="ECO:0007669"/>
    <property type="project" value="UniProtKB-KW"/>
</dbReference>
<dbReference type="GO" id="GO:0050567">
    <property type="term" value="F:glutaminyl-tRNA synthase (glutamine-hydrolyzing) activity"/>
    <property type="evidence" value="ECO:0007669"/>
    <property type="project" value="UniProtKB-UniRule"/>
</dbReference>
<dbReference type="GO" id="GO:0070681">
    <property type="term" value="P:glutaminyl-tRNAGln biosynthesis via transamidation"/>
    <property type="evidence" value="ECO:0007669"/>
    <property type="project" value="TreeGrafter"/>
</dbReference>
<dbReference type="GO" id="GO:0006412">
    <property type="term" value="P:translation"/>
    <property type="evidence" value="ECO:0007669"/>
    <property type="project" value="UniProtKB-UniRule"/>
</dbReference>
<dbReference type="FunFam" id="1.10.10.410:FF:000001">
    <property type="entry name" value="Aspartyl/glutamyl-tRNA(Asn/Gln) amidotransferase subunit B"/>
    <property type="match status" value="1"/>
</dbReference>
<dbReference type="FunFam" id="1.10.150.380:FF:000001">
    <property type="entry name" value="Aspartyl/glutamyl-tRNA(Asn/Gln) amidotransferase subunit B"/>
    <property type="match status" value="1"/>
</dbReference>
<dbReference type="Gene3D" id="1.10.10.410">
    <property type="match status" value="1"/>
</dbReference>
<dbReference type="Gene3D" id="1.10.150.380">
    <property type="entry name" value="GatB domain, N-terminal subdomain"/>
    <property type="match status" value="1"/>
</dbReference>
<dbReference type="HAMAP" id="MF_00121">
    <property type="entry name" value="GatB"/>
    <property type="match status" value="1"/>
</dbReference>
<dbReference type="InterPro" id="IPR017959">
    <property type="entry name" value="Asn/Gln-tRNA_amidoTrfase_suB/E"/>
</dbReference>
<dbReference type="InterPro" id="IPR006075">
    <property type="entry name" value="Asn/Gln-tRNA_Trfase_suB/E_cat"/>
</dbReference>
<dbReference type="InterPro" id="IPR018027">
    <property type="entry name" value="Asn/Gln_amidotransferase"/>
</dbReference>
<dbReference type="InterPro" id="IPR003789">
    <property type="entry name" value="Asn/Gln_tRNA_amidoTrase-B-like"/>
</dbReference>
<dbReference type="InterPro" id="IPR004413">
    <property type="entry name" value="GatB"/>
</dbReference>
<dbReference type="InterPro" id="IPR042114">
    <property type="entry name" value="GatB_C_1"/>
</dbReference>
<dbReference type="InterPro" id="IPR023168">
    <property type="entry name" value="GatB_Yqey_C_2"/>
</dbReference>
<dbReference type="InterPro" id="IPR017958">
    <property type="entry name" value="Gln-tRNA_amidoTrfase_suB_CS"/>
</dbReference>
<dbReference type="InterPro" id="IPR014746">
    <property type="entry name" value="Gln_synth/guanido_kin_cat_dom"/>
</dbReference>
<dbReference type="NCBIfam" id="TIGR00133">
    <property type="entry name" value="gatB"/>
    <property type="match status" value="1"/>
</dbReference>
<dbReference type="NCBIfam" id="NF004012">
    <property type="entry name" value="PRK05477.1-2"/>
    <property type="match status" value="1"/>
</dbReference>
<dbReference type="NCBIfam" id="NF004014">
    <property type="entry name" value="PRK05477.1-4"/>
    <property type="match status" value="1"/>
</dbReference>
<dbReference type="PANTHER" id="PTHR11659">
    <property type="entry name" value="GLUTAMYL-TRNA GLN AMIDOTRANSFERASE SUBUNIT B MITOCHONDRIAL AND PROKARYOTIC PET112-RELATED"/>
    <property type="match status" value="1"/>
</dbReference>
<dbReference type="PANTHER" id="PTHR11659:SF0">
    <property type="entry name" value="GLUTAMYL-TRNA(GLN) AMIDOTRANSFERASE SUBUNIT B, MITOCHONDRIAL"/>
    <property type="match status" value="1"/>
</dbReference>
<dbReference type="Pfam" id="PF02934">
    <property type="entry name" value="GatB_N"/>
    <property type="match status" value="1"/>
</dbReference>
<dbReference type="Pfam" id="PF02637">
    <property type="entry name" value="GatB_Yqey"/>
    <property type="match status" value="1"/>
</dbReference>
<dbReference type="SMART" id="SM00845">
    <property type="entry name" value="GatB_Yqey"/>
    <property type="match status" value="1"/>
</dbReference>
<dbReference type="SUPFAM" id="SSF89095">
    <property type="entry name" value="GatB/YqeY motif"/>
    <property type="match status" value="1"/>
</dbReference>
<dbReference type="SUPFAM" id="SSF55931">
    <property type="entry name" value="Glutamine synthetase/guanido kinase"/>
    <property type="match status" value="1"/>
</dbReference>
<dbReference type="PROSITE" id="PS01234">
    <property type="entry name" value="GATB"/>
    <property type="match status" value="1"/>
</dbReference>
<keyword id="KW-0067">ATP-binding</keyword>
<keyword id="KW-0436">Ligase</keyword>
<keyword id="KW-0547">Nucleotide-binding</keyword>
<keyword id="KW-0648">Protein biosynthesis</keyword>
<keyword id="KW-1185">Reference proteome</keyword>
<evidence type="ECO:0000255" key="1">
    <source>
        <dbReference type="HAMAP-Rule" id="MF_00121"/>
    </source>
</evidence>
<name>GATB_ROSCS</name>
<proteinExistence type="inferred from homology"/>
<gene>
    <name evidence="1" type="primary">gatB</name>
    <name type="ordered locus">Rcas_3949</name>
</gene>
<feature type="chain" id="PRO_1000095239" description="Aspartyl/glutamyl-tRNA(Asn/Gln) amidotransferase subunit B">
    <location>
        <begin position="1"/>
        <end position="483"/>
    </location>
</feature>
<comment type="function">
    <text evidence="1">Allows the formation of correctly charged Asn-tRNA(Asn) or Gln-tRNA(Gln) through the transamidation of misacylated Asp-tRNA(Asn) or Glu-tRNA(Gln) in organisms which lack either or both of asparaginyl-tRNA or glutaminyl-tRNA synthetases. The reaction takes place in the presence of glutamine and ATP through an activated phospho-Asp-tRNA(Asn) or phospho-Glu-tRNA(Gln).</text>
</comment>
<comment type="catalytic activity">
    <reaction evidence="1">
        <text>L-glutamyl-tRNA(Gln) + L-glutamine + ATP + H2O = L-glutaminyl-tRNA(Gln) + L-glutamate + ADP + phosphate + H(+)</text>
        <dbReference type="Rhea" id="RHEA:17521"/>
        <dbReference type="Rhea" id="RHEA-COMP:9681"/>
        <dbReference type="Rhea" id="RHEA-COMP:9684"/>
        <dbReference type="ChEBI" id="CHEBI:15377"/>
        <dbReference type="ChEBI" id="CHEBI:15378"/>
        <dbReference type="ChEBI" id="CHEBI:29985"/>
        <dbReference type="ChEBI" id="CHEBI:30616"/>
        <dbReference type="ChEBI" id="CHEBI:43474"/>
        <dbReference type="ChEBI" id="CHEBI:58359"/>
        <dbReference type="ChEBI" id="CHEBI:78520"/>
        <dbReference type="ChEBI" id="CHEBI:78521"/>
        <dbReference type="ChEBI" id="CHEBI:456216"/>
    </reaction>
</comment>
<comment type="catalytic activity">
    <reaction evidence="1">
        <text>L-aspartyl-tRNA(Asn) + L-glutamine + ATP + H2O = L-asparaginyl-tRNA(Asn) + L-glutamate + ADP + phosphate + 2 H(+)</text>
        <dbReference type="Rhea" id="RHEA:14513"/>
        <dbReference type="Rhea" id="RHEA-COMP:9674"/>
        <dbReference type="Rhea" id="RHEA-COMP:9677"/>
        <dbReference type="ChEBI" id="CHEBI:15377"/>
        <dbReference type="ChEBI" id="CHEBI:15378"/>
        <dbReference type="ChEBI" id="CHEBI:29985"/>
        <dbReference type="ChEBI" id="CHEBI:30616"/>
        <dbReference type="ChEBI" id="CHEBI:43474"/>
        <dbReference type="ChEBI" id="CHEBI:58359"/>
        <dbReference type="ChEBI" id="CHEBI:78515"/>
        <dbReference type="ChEBI" id="CHEBI:78516"/>
        <dbReference type="ChEBI" id="CHEBI:456216"/>
    </reaction>
</comment>
<comment type="subunit">
    <text evidence="1">Heterotrimer of A, B and C subunits.</text>
</comment>
<comment type="similarity">
    <text evidence="1">Belongs to the GatB/GatE family. GatB subfamily.</text>
</comment>